<feature type="initiator methionine" description="Removed" evidence="19">
    <location>
        <position position="1"/>
    </location>
</feature>
<feature type="chain" id="PRO_0000120764" description="Importin subunit beta-1">
    <location>
        <begin position="2"/>
        <end position="861"/>
    </location>
</feature>
<feature type="repeat" description="HEAT 1" evidence="7">
    <location>
        <begin position="3"/>
        <end position="35"/>
    </location>
</feature>
<feature type="domain" description="Importin N-terminal" evidence="1">
    <location>
        <begin position="25"/>
        <end position="106"/>
    </location>
</feature>
<feature type="repeat" description="HEAT 2" evidence="7">
    <location>
        <begin position="37"/>
        <end position="66"/>
    </location>
</feature>
<feature type="repeat" description="HEAT 3" evidence="7">
    <location>
        <begin position="90"/>
        <end position="129"/>
    </location>
</feature>
<feature type="repeat" description="HEAT 4" evidence="7">
    <location>
        <begin position="134"/>
        <end position="164"/>
    </location>
</feature>
<feature type="repeat" description="HEAT 5" evidence="7">
    <location>
        <begin position="177"/>
        <end position="208"/>
    </location>
</feature>
<feature type="repeat" description="HEAT 6" evidence="7">
    <location>
        <begin position="219"/>
        <end position="255"/>
    </location>
</feature>
<feature type="repeat" description="HEAT 7" evidence="7">
    <location>
        <begin position="260"/>
        <end position="306"/>
    </location>
</feature>
<feature type="repeat" description="HEAT 8" evidence="7">
    <location>
        <begin position="317"/>
        <end position="362"/>
    </location>
</feature>
<feature type="repeat" description="HEAT 9" evidence="7">
    <location>
        <begin position="367"/>
        <end position="395"/>
    </location>
</feature>
<feature type="repeat" description="HEAT 10" evidence="7">
    <location>
        <begin position="402"/>
        <end position="442"/>
    </location>
</feature>
<feature type="repeat" description="HEAT 11" evidence="7">
    <location>
        <begin position="452"/>
        <end position="484"/>
    </location>
</feature>
<feature type="repeat" description="HEAT 12" evidence="7">
    <location>
        <begin position="496"/>
        <end position="530"/>
    </location>
</feature>
<feature type="repeat" description="HEAT 13" evidence="7">
    <location>
        <begin position="536"/>
        <end position="586"/>
    </location>
</feature>
<feature type="repeat" description="HEAT 14" evidence="7">
    <location>
        <begin position="592"/>
        <end position="629"/>
    </location>
</feature>
<feature type="repeat" description="HEAT 15" evidence="7">
    <location>
        <begin position="634"/>
        <end position="669"/>
    </location>
</feature>
<feature type="repeat" description="HEAT 16" evidence="7">
    <location>
        <begin position="675"/>
        <end position="713"/>
    </location>
</feature>
<feature type="repeat" description="HEAT 17" evidence="7">
    <location>
        <begin position="718"/>
        <end position="764"/>
    </location>
</feature>
<feature type="repeat" description="HEAT 18" evidence="7">
    <location>
        <begin position="773"/>
        <end position="812"/>
    </location>
</feature>
<feature type="repeat" description="HEAT 19" evidence="7">
    <location>
        <begin position="819"/>
        <end position="859"/>
    </location>
</feature>
<feature type="modified residue" description="N-acetylserine" evidence="19">
    <location>
        <position position="2"/>
    </location>
</feature>
<feature type="modified residue" description="Phosphoserine" evidence="18">
    <location>
        <position position="836"/>
    </location>
</feature>
<feature type="helix" evidence="23">
    <location>
        <begin position="3"/>
        <end position="15"/>
    </location>
</feature>
<feature type="helix" evidence="23">
    <location>
        <begin position="19"/>
        <end position="35"/>
    </location>
</feature>
<feature type="helix" evidence="23">
    <location>
        <begin position="37"/>
        <end position="48"/>
    </location>
</feature>
<feature type="helix" evidence="23">
    <location>
        <begin position="55"/>
        <end position="67"/>
    </location>
</feature>
<feature type="helix" evidence="23">
    <location>
        <begin position="74"/>
        <end position="87"/>
    </location>
</feature>
<feature type="helix" evidence="23">
    <location>
        <begin position="90"/>
        <end position="104"/>
    </location>
</feature>
<feature type="helix" evidence="23">
    <location>
        <begin position="109"/>
        <end position="126"/>
    </location>
</feature>
<feature type="helix" evidence="23">
    <location>
        <begin position="127"/>
        <end position="129"/>
    </location>
</feature>
<feature type="helix" evidence="23">
    <location>
        <begin position="134"/>
        <end position="142"/>
    </location>
</feature>
<feature type="helix" evidence="23">
    <location>
        <begin position="149"/>
        <end position="165"/>
    </location>
</feature>
<feature type="strand" evidence="21">
    <location>
        <begin position="166"/>
        <end position="169"/>
    </location>
</feature>
<feature type="helix" evidence="23">
    <location>
        <begin position="174"/>
        <end position="176"/>
    </location>
</feature>
<feature type="helix" evidence="23">
    <location>
        <begin position="177"/>
        <end position="188"/>
    </location>
</feature>
<feature type="helix" evidence="23">
    <location>
        <begin position="195"/>
        <end position="208"/>
    </location>
</feature>
<feature type="helix" evidence="23">
    <location>
        <begin position="209"/>
        <end position="211"/>
    </location>
</feature>
<feature type="helix" evidence="23">
    <location>
        <begin position="213"/>
        <end position="216"/>
    </location>
</feature>
<feature type="helix" evidence="23">
    <location>
        <begin position="219"/>
        <end position="233"/>
    </location>
</feature>
<feature type="helix" evidence="23">
    <location>
        <begin position="238"/>
        <end position="255"/>
    </location>
</feature>
<feature type="helix" evidence="23">
    <location>
        <begin position="256"/>
        <end position="258"/>
    </location>
</feature>
<feature type="helix" evidence="23">
    <location>
        <begin position="260"/>
        <end position="265"/>
    </location>
</feature>
<feature type="helix" evidence="23">
    <location>
        <begin position="267"/>
        <end position="274"/>
    </location>
</feature>
<feature type="helix" evidence="23">
    <location>
        <begin position="280"/>
        <end position="306"/>
    </location>
</feature>
<feature type="helix" evidence="23">
    <location>
        <begin position="317"/>
        <end position="332"/>
    </location>
</feature>
<feature type="helix" evidence="23">
    <location>
        <begin position="347"/>
        <end position="362"/>
    </location>
</feature>
<feature type="helix" evidence="23">
    <location>
        <begin position="363"/>
        <end position="366"/>
    </location>
</feature>
<feature type="helix" evidence="23">
    <location>
        <begin position="367"/>
        <end position="377"/>
    </location>
</feature>
<feature type="helix" evidence="23">
    <location>
        <begin position="383"/>
        <end position="395"/>
    </location>
</feature>
<feature type="strand" evidence="23">
    <location>
        <begin position="397"/>
        <end position="400"/>
    </location>
</feature>
<feature type="helix" evidence="23">
    <location>
        <begin position="402"/>
        <end position="418"/>
    </location>
</feature>
<feature type="helix" evidence="23">
    <location>
        <begin position="419"/>
        <end position="421"/>
    </location>
</feature>
<feature type="helix" evidence="23">
    <location>
        <begin position="425"/>
        <end position="442"/>
    </location>
</feature>
<feature type="helix" evidence="23">
    <location>
        <begin position="443"/>
        <end position="445"/>
    </location>
</feature>
<feature type="turn" evidence="23">
    <location>
        <begin position="448"/>
        <end position="451"/>
    </location>
</feature>
<feature type="helix" evidence="23">
    <location>
        <begin position="452"/>
        <end position="463"/>
    </location>
</feature>
<feature type="helix" evidence="23">
    <location>
        <begin position="467"/>
        <end position="484"/>
    </location>
</feature>
<feature type="strand" evidence="23">
    <location>
        <begin position="487"/>
        <end position="489"/>
    </location>
</feature>
<feature type="helix" evidence="23">
    <location>
        <begin position="491"/>
        <end position="495"/>
    </location>
</feature>
<feature type="helix" evidence="23">
    <location>
        <begin position="496"/>
        <end position="507"/>
    </location>
</feature>
<feature type="strand" evidence="22">
    <location>
        <begin position="509"/>
        <end position="511"/>
    </location>
</feature>
<feature type="helix" evidence="23">
    <location>
        <begin position="513"/>
        <end position="515"/>
    </location>
</feature>
<feature type="helix" evidence="23">
    <location>
        <begin position="516"/>
        <end position="530"/>
    </location>
</feature>
<feature type="helix" evidence="23">
    <location>
        <begin position="533"/>
        <end position="535"/>
    </location>
</feature>
<feature type="helix" evidence="23">
    <location>
        <begin position="536"/>
        <end position="553"/>
    </location>
</feature>
<feature type="helix" evidence="23">
    <location>
        <begin position="558"/>
        <end position="560"/>
    </location>
</feature>
<feature type="helix" evidence="23">
    <location>
        <begin position="563"/>
        <end position="586"/>
    </location>
</feature>
<feature type="helix" evidence="23">
    <location>
        <begin position="588"/>
        <end position="590"/>
    </location>
</feature>
<feature type="helix" evidence="23">
    <location>
        <begin position="592"/>
        <end position="594"/>
    </location>
</feature>
<feature type="helix" evidence="23">
    <location>
        <begin position="595"/>
        <end position="607"/>
    </location>
</feature>
<feature type="strand" evidence="21">
    <location>
        <begin position="608"/>
        <end position="610"/>
    </location>
</feature>
<feature type="helix" evidence="23">
    <location>
        <begin position="611"/>
        <end position="613"/>
    </location>
</feature>
<feature type="helix" evidence="23">
    <location>
        <begin position="615"/>
        <end position="629"/>
    </location>
</feature>
<feature type="helix" evidence="23">
    <location>
        <begin position="630"/>
        <end position="636"/>
    </location>
</feature>
<feature type="helix" evidence="23">
    <location>
        <begin position="637"/>
        <end position="649"/>
    </location>
</feature>
<feature type="helix" evidence="23">
    <location>
        <begin position="655"/>
        <end position="669"/>
    </location>
</feature>
<feature type="helix" evidence="23">
    <location>
        <begin position="671"/>
        <end position="674"/>
    </location>
</feature>
<feature type="helix" evidence="23">
    <location>
        <begin position="675"/>
        <end position="689"/>
    </location>
</feature>
<feature type="helix" evidence="23">
    <location>
        <begin position="698"/>
        <end position="713"/>
    </location>
</feature>
<feature type="helix" evidence="23">
    <location>
        <begin position="714"/>
        <end position="717"/>
    </location>
</feature>
<feature type="helix" evidence="23">
    <location>
        <begin position="718"/>
        <end position="732"/>
    </location>
</feature>
<feature type="strand" evidence="23">
    <location>
        <begin position="737"/>
        <end position="740"/>
    </location>
</feature>
<feature type="helix" evidence="23">
    <location>
        <begin position="741"/>
        <end position="764"/>
    </location>
</feature>
<feature type="turn" evidence="23">
    <location>
        <begin position="765"/>
        <end position="767"/>
    </location>
</feature>
<feature type="helix" evidence="23">
    <location>
        <begin position="769"/>
        <end position="772"/>
    </location>
</feature>
<feature type="helix" evidence="23">
    <location>
        <begin position="773"/>
        <end position="775"/>
    </location>
</feature>
<feature type="helix" evidence="23">
    <location>
        <begin position="776"/>
        <end position="788"/>
    </location>
</feature>
<feature type="helix" evidence="23">
    <location>
        <begin position="790"/>
        <end position="793"/>
    </location>
</feature>
<feature type="helix" evidence="23">
    <location>
        <begin position="796"/>
        <end position="812"/>
    </location>
</feature>
<feature type="strand" evidence="20">
    <location>
        <begin position="816"/>
        <end position="818"/>
    </location>
</feature>
<feature type="helix" evidence="23">
    <location>
        <begin position="819"/>
        <end position="821"/>
    </location>
</feature>
<feature type="helix" evidence="23">
    <location>
        <begin position="825"/>
        <end position="836"/>
    </location>
</feature>
<feature type="strand" evidence="21">
    <location>
        <begin position="837"/>
        <end position="840"/>
    </location>
</feature>
<feature type="helix" evidence="23">
    <location>
        <begin position="842"/>
        <end position="860"/>
    </location>
</feature>
<keyword id="KW-0002">3D-structure</keyword>
<keyword id="KW-0007">Acetylation</keyword>
<keyword id="KW-0963">Cytoplasm</keyword>
<keyword id="KW-0903">Direct protein sequencing</keyword>
<keyword id="KW-0509">mRNA transport</keyword>
<keyword id="KW-0906">Nuclear pore complex</keyword>
<keyword id="KW-0539">Nucleus</keyword>
<keyword id="KW-0597">Phosphoprotein</keyword>
<keyword id="KW-0653">Protein transport</keyword>
<keyword id="KW-1185">Reference proteome</keyword>
<keyword id="KW-0677">Repeat</keyword>
<keyword id="KW-0811">Translocation</keyword>
<keyword id="KW-0813">Transport</keyword>
<organism>
    <name type="scientific">Saccharomyces cerevisiae (strain ATCC 204508 / S288c)</name>
    <name type="common">Baker's yeast</name>
    <dbReference type="NCBI Taxonomy" id="559292"/>
    <lineage>
        <taxon>Eukaryota</taxon>
        <taxon>Fungi</taxon>
        <taxon>Dikarya</taxon>
        <taxon>Ascomycota</taxon>
        <taxon>Saccharomycotina</taxon>
        <taxon>Saccharomycetes</taxon>
        <taxon>Saccharomycetales</taxon>
        <taxon>Saccharomycetaceae</taxon>
        <taxon>Saccharomyces</taxon>
    </lineage>
</organism>
<proteinExistence type="evidence at protein level"/>
<name>IMB1_YEAST</name>
<accession>Q06142</accession>
<accession>D6VYY6</accession>
<gene>
    <name evidence="13 17" type="primary">KAP95</name>
    <name evidence="17" type="ordered locus">YLR347C</name>
    <name type="ORF">L8300.15</name>
</gene>
<protein>
    <recommendedName>
        <fullName evidence="14">Importin subunit beta-1</fullName>
    </recommendedName>
    <alternativeName>
        <fullName evidence="15">Importin-95</fullName>
    </alternativeName>
    <alternativeName>
        <fullName evidence="13">Karyopherin subunit beta-1</fullName>
    </alternativeName>
    <alternativeName>
        <fullName evidence="13">Karyopherin-95</fullName>
    </alternativeName>
</protein>
<evidence type="ECO:0000255" key="1">
    <source>
        <dbReference type="PROSITE-ProRule" id="PRU00115"/>
    </source>
</evidence>
<evidence type="ECO:0000269" key="2">
    <source>
    </source>
</evidence>
<evidence type="ECO:0000269" key="3">
    <source>
    </source>
</evidence>
<evidence type="ECO:0000269" key="4">
    <source>
    </source>
</evidence>
<evidence type="ECO:0000269" key="5">
    <source>
    </source>
</evidence>
<evidence type="ECO:0000269" key="6">
    <source>
    </source>
</evidence>
<evidence type="ECO:0000269" key="7">
    <source>
    </source>
</evidence>
<evidence type="ECO:0000269" key="8">
    <source>
    </source>
</evidence>
<evidence type="ECO:0000269" key="9">
    <source>
    </source>
</evidence>
<evidence type="ECO:0000269" key="10">
    <source>
    </source>
</evidence>
<evidence type="ECO:0000269" key="11">
    <source>
    </source>
</evidence>
<evidence type="ECO:0000303" key="12">
    <source>
    </source>
</evidence>
<evidence type="ECO:0000303" key="13">
    <source>
    </source>
</evidence>
<evidence type="ECO:0000303" key="14">
    <source>
    </source>
</evidence>
<evidence type="ECO:0000305" key="15"/>
<evidence type="ECO:0000305" key="16">
    <source>
    </source>
</evidence>
<evidence type="ECO:0000312" key="17">
    <source>
        <dbReference type="SGD" id="S000004339"/>
    </source>
</evidence>
<evidence type="ECO:0007744" key="18">
    <source>
    </source>
</evidence>
<evidence type="ECO:0007744" key="19">
    <source>
    </source>
</evidence>
<evidence type="ECO:0007829" key="20">
    <source>
        <dbReference type="PDB" id="2BKU"/>
    </source>
</evidence>
<evidence type="ECO:0007829" key="21">
    <source>
        <dbReference type="PDB" id="3EA5"/>
    </source>
</evidence>
<evidence type="ECO:0007829" key="22">
    <source>
        <dbReference type="PDB" id="3ND2"/>
    </source>
</evidence>
<evidence type="ECO:0007829" key="23">
    <source>
        <dbReference type="PDB" id="5OWU"/>
    </source>
</evidence>
<comment type="function">
    <text evidence="3 5 6 8 9 16">Importin beta subunit that functions in nuclear protein import through association with the importin alpha subunit, which binds to the classical nuclear localization signal (cNLS) in cargo substrates (PubMed:7622450). Docking of the importin/substrate complex to the nuclear pore complex (NPC) is mediated by importin beta through binding to nucleoporin FxFG repeats and the complex is subsequently translocated through the pore by an energy requiring, Ran-dependent mechanism (PubMed:8521485). At the nucleoplasmic side of the NPC, GTP-Ran binds to importin beta and the three components separate, leading to release of the cargo (PubMed:15864302). Importin alpha and beta are re-exported from the nucleus to the cytoplasm where GTP hydrolysis releases Ran from importin beta. The directionality of nuclear import is thought to be conferred by an asymmetric distribution of the GTP- and GDP-bound forms of Ran between the cytoplasm and nucleus (PubMed:11423015). Mediates the nuclear import of histones H2A and H2B (PubMed:11309407). Mediates the nuclear import of transcription factor GCN4 (PubMed:14648200).</text>
</comment>
<comment type="subunit">
    <text evidence="7 8 9 10 11">Forms a complex with the importin alpha subunit (SRP1/KAP60) (PubMed:7622450). Interacts with Ran (GSP1); interacts specifically with the GTP-bound form of Ran (GTP-Ran), protecting it from GTP hydrolysis and nucleotide exchange (PubMed:8621381, PubMed:9321403). Interacts with nucleoporin NUP1 (PubMed:15878174, PubMed:8521485).</text>
</comment>
<comment type="interaction">
    <interactant intactId="EBI-9145">
        <id>Q06142</id>
    </interactant>
    <interactant intactId="EBI-12265">
        <id>P14907</id>
        <label>NSP1</label>
    </interactant>
    <organismsDiffer>false</organismsDiffer>
    <experiments>4</experiments>
</comment>
<comment type="interaction">
    <interactant intactId="EBI-9145">
        <id>Q06142</id>
    </interactant>
    <interactant intactId="EBI-12392">
        <id>P20676</id>
        <label>NUP1</label>
    </interactant>
    <organismsDiffer>false</organismsDiffer>
    <experiments>7</experiments>
</comment>
<comment type="interaction">
    <interactant intactId="EBI-9145">
        <id>Q06142</id>
    </interactant>
    <interactant intactId="EBI-11698">
        <id>Q02629</id>
        <label>NUP100</label>
    </interactant>
    <organismsDiffer>false</organismsDiffer>
    <experiments>6</experiments>
</comment>
<comment type="interaction">
    <interactant intactId="EBI-9145">
        <id>Q06142</id>
    </interactant>
    <interactant intactId="EBI-11703">
        <id>Q02630</id>
        <label>NUP116</label>
    </interactant>
    <organismsDiffer>false</organismsDiffer>
    <experiments>4</experiments>
</comment>
<comment type="interaction">
    <interactant intactId="EBI-9145">
        <id>Q06142</id>
    </interactant>
    <interactant intactId="EBI-11747">
        <id>P40477</id>
        <label>NUP159</label>
    </interactant>
    <organismsDiffer>false</organismsDiffer>
    <experiments>3</experiments>
</comment>
<comment type="interaction">
    <interactant intactId="EBI-9145">
        <id>Q06142</id>
    </interactant>
    <interactant intactId="EBI-12401">
        <id>P32499</id>
        <label>NUP2</label>
    </interactant>
    <organismsDiffer>false</organismsDiffer>
    <experiments>6</experiments>
</comment>
<comment type="interaction">
    <interactant intactId="EBI-9145">
        <id>Q06142</id>
    </interactant>
    <interactant intactId="EBI-12310">
        <id>P49686</id>
        <label>NUP42</label>
    </interactant>
    <organismsDiffer>false</organismsDiffer>
    <experiments>2</experiments>
</comment>
<comment type="interaction">
    <interactant intactId="EBI-9145">
        <id>Q06142</id>
    </interactant>
    <interactant intactId="EBI-12315">
        <id>Q02199</id>
        <label>NUP49</label>
    </interactant>
    <organismsDiffer>false</organismsDiffer>
    <experiments>2</experiments>
</comment>
<comment type="interaction">
    <interactant intactId="EBI-9145">
        <id>Q06142</id>
    </interactant>
    <interactant intactId="EBI-12324">
        <id>P48837</id>
        <label>NUP57</label>
    </interactant>
    <organismsDiffer>false</organismsDiffer>
    <experiments>2</experiments>
</comment>
<comment type="interaction">
    <interactant intactId="EBI-9145">
        <id>Q06142</id>
    </interactant>
    <interactant intactId="EBI-20731">
        <id>P39705</id>
        <label>NUP60</label>
    </interactant>
    <organismsDiffer>false</organismsDiffer>
    <experiments>4</experiments>
</comment>
<comment type="interaction">
    <interactant intactId="EBI-9145">
        <id>Q06142</id>
    </interactant>
    <interactant intactId="EBI-1797">
        <id>Q02821</id>
        <label>SRP1</label>
    </interactant>
    <organismsDiffer>false</organismsDiffer>
    <experiments>10</experiments>
</comment>
<comment type="subcellular location">
    <subcellularLocation>
        <location evidence="2 11">Cytoplasm</location>
    </subcellularLocation>
    <subcellularLocation>
        <location evidence="11">Nucleus</location>
    </subcellularLocation>
    <subcellularLocation>
        <location evidence="2">Nucleus</location>
        <location evidence="2">Nuclear pore complex</location>
    </subcellularLocation>
</comment>
<comment type="miscellaneous">
    <text evidence="9">Binds to nucleoporin FxFG but not GLFG repeat regions. Ran-GTP can disrupt the importin alpha/beta heterodimer by binding to the beta subunit and releases both subunits from the docking site.</text>
</comment>
<comment type="miscellaneous">
    <text evidence="10">The stoichiometric complex between importin beta and Ran-GTP renders the latter inaccessible to Ran-specific GTPase activating protein (Ran-GAP) thereby inhibiting GTP hydrolysis stimulated by Ran-GAP.</text>
</comment>
<comment type="miscellaneous">
    <text evidence="4">Present with 51700 molecules/cell in log phase SD medium.</text>
</comment>
<comment type="similarity">
    <text evidence="15">Belongs to the importin beta family. Importin beta-1 subfamily.</text>
</comment>
<sequence>MSTAEFAQLLENSILSPDQNIRLTSETQLKKLSNDNFLQFAGLSSQVLIDENTKLEGRILAALTLKNELVSKDSVKTQQFAQRWITQVSPEAKNQIKTNALTALVSIEPRIANAAAQLIAAIADIELPHGAWPELMKIMVDNTGAEQPENVKRASLLALGYMCESADPQSQALVSSSNNILIAIVQGAQSTETSKAVRLAALNALADSLIFIKNNMEREGERNYLMQVVCEATQAEDIEVQAAAFGCLCKIMSLYYTFMKPYMEQALYALTIATMKSPNDKVASMTVEFWSTICEEEIDIAYELAQFPQSPLQSYNFALSSIKDVVPNLLNLLTRQNEDPEDDDWNVSMSAGACLQLFAQNCGNHILEPVLEFVEQNITADNWRNREAAVMAFGSIMDGPDKVQRTYYVHQALPSILNLMNDQSLQVKETTAWCIGRIADSVAESIDPQQHLPGVVQACLIGLQDHPKVATNCSWTIINLVEQLAEATPSPIYNFYPALVDGLIGAANRIDNEFNARASAFSALTTMVEYATDTVAETSASISTFVMDKLGQTMSVDENQLTLEDAQSLQELQSNILTVLAAVIRKSPSSVEPVADMLMGLFFRLLEKKDSAFIEDDVFYAISALAASLGKGFEKYLETFSPYLLKALNQVDSPVSITAVGFIADISNSLEEDFRRYSDAMMNVLAQMISNPNARRELKPAVLSVFGDIASNIGADFIPYLNDIMALCVAAQNTKPENGTLEALDYQIKVLEAVLDAYVGIVAGLHDKPEALFPYVGTIFQFIAQVAEDPQLYSEDATSRAAVGLIGDIAAMFPDGSIKQFYGQDWVIDYIKRTRSGQLFSQATKDTARWAREQQKRQLSL</sequence>
<reference key="1">
    <citation type="journal article" date="1997" name="Nature">
        <title>The nucleotide sequence of Saccharomyces cerevisiae chromosome XII.</title>
        <authorList>
            <person name="Johnston M."/>
            <person name="Hillier L.W."/>
            <person name="Riles L."/>
            <person name="Albermann K."/>
            <person name="Andre B."/>
            <person name="Ansorge W."/>
            <person name="Benes V."/>
            <person name="Brueckner M."/>
            <person name="Delius H."/>
            <person name="Dubois E."/>
            <person name="Duesterhoeft A."/>
            <person name="Entian K.-D."/>
            <person name="Floeth M."/>
            <person name="Goffeau A."/>
            <person name="Hebling U."/>
            <person name="Heumann K."/>
            <person name="Heuss-Neitzel D."/>
            <person name="Hilbert H."/>
            <person name="Hilger F."/>
            <person name="Kleine K."/>
            <person name="Koetter P."/>
            <person name="Louis E.J."/>
            <person name="Messenguy F."/>
            <person name="Mewes H.-W."/>
            <person name="Miosga T."/>
            <person name="Moestl D."/>
            <person name="Mueller-Auer S."/>
            <person name="Nentwich U."/>
            <person name="Obermaier B."/>
            <person name="Piravandi E."/>
            <person name="Pohl T.M."/>
            <person name="Portetelle D."/>
            <person name="Purnelle B."/>
            <person name="Rechmann S."/>
            <person name="Rieger M."/>
            <person name="Rinke M."/>
            <person name="Rose M."/>
            <person name="Scharfe M."/>
            <person name="Scherens B."/>
            <person name="Scholler P."/>
            <person name="Schwager C."/>
            <person name="Schwarz S."/>
            <person name="Underwood A.P."/>
            <person name="Urrestarazu L.A."/>
            <person name="Vandenbol M."/>
            <person name="Verhasselt P."/>
            <person name="Vierendeels F."/>
            <person name="Voet M."/>
            <person name="Volckaert G."/>
            <person name="Voss H."/>
            <person name="Wambutt R."/>
            <person name="Wedler E."/>
            <person name="Wedler H."/>
            <person name="Zimmermann F.K."/>
            <person name="Zollner A."/>
            <person name="Hani J."/>
            <person name="Hoheisel J.D."/>
        </authorList>
    </citation>
    <scope>NUCLEOTIDE SEQUENCE [LARGE SCALE GENOMIC DNA]</scope>
    <source>
        <strain>ATCC 204508 / S288c</strain>
    </source>
</reference>
<reference key="2">
    <citation type="journal article" date="2014" name="G3 (Bethesda)">
        <title>The reference genome sequence of Saccharomyces cerevisiae: Then and now.</title>
        <authorList>
            <person name="Engel S.R."/>
            <person name="Dietrich F.S."/>
            <person name="Fisk D.G."/>
            <person name="Binkley G."/>
            <person name="Balakrishnan R."/>
            <person name="Costanzo M.C."/>
            <person name="Dwight S.S."/>
            <person name="Hitz B.C."/>
            <person name="Karra K."/>
            <person name="Nash R.S."/>
            <person name="Weng S."/>
            <person name="Wong E.D."/>
            <person name="Lloyd P."/>
            <person name="Skrzypek M.S."/>
            <person name="Miyasato S.R."/>
            <person name="Simison M."/>
            <person name="Cherry J.M."/>
        </authorList>
    </citation>
    <scope>GENOME REANNOTATION</scope>
    <source>
        <strain>ATCC 204508 / S288c</strain>
    </source>
</reference>
<reference key="3">
    <citation type="journal article" date="1995" name="J. Biol. Chem.">
        <title>Identification of a yeast karyopherin heterodimer that targets import substrate to mammalian nuclear pore complexes.</title>
        <authorList>
            <person name="Enenkel C."/>
            <person name="Blobel G."/>
            <person name="Rexach M."/>
        </authorList>
    </citation>
    <scope>PROTEIN SEQUENCE OF 819-846</scope>
    <scope>FUNCTION</scope>
    <scope>INTERACTION WITH SRP1</scope>
</reference>
<reference key="4">
    <citation type="journal article" date="1996" name="J. Biol. Chem.">
        <title>The nuclear transport factor karyopherin beta binds stoichiometrically to Ran-GTP and inhibits the Ran GTPase activating protein.</title>
        <authorList>
            <person name="Floer M."/>
            <person name="Blobel G."/>
        </authorList>
    </citation>
    <scope>INTERACTION WITH GSP1</scope>
</reference>
<reference key="5">
    <citation type="journal article" date="1995" name="Cell">
        <title>Protein import into nuclei: association and dissociation reactions involving transport substrate, transport factors, and nucleoporins.</title>
        <authorList>
            <person name="Rexach M."/>
            <person name="Blobel G."/>
        </authorList>
    </citation>
    <scope>FUNCTION</scope>
    <scope>INTERACTION WITH NUP1</scope>
</reference>
<reference key="6">
    <citation type="journal article" date="1997" name="EMBO J.">
        <title>Yrb4p, a yeast ran-GTP-binding protein involved in import of ribosomal protein L25 into the nucleus.</title>
        <authorList>
            <person name="Schlenstedt G."/>
            <person name="Smirnova E."/>
            <person name="Deane R."/>
            <person name="Solsbacher J."/>
            <person name="Kutay U."/>
            <person name="Goerlich D."/>
            <person name="Ponstingl H."/>
            <person name="Bischoff F.R."/>
        </authorList>
    </citation>
    <scope>SUBCELLULAR LOCATION</scope>
    <scope>INTERACTION WITH GSP1</scope>
</reference>
<reference key="7">
    <citation type="journal article" date="2000" name="J. Cell Biol.">
        <title>The yeast nuclear pore complex: composition, architecture, and transport mechanism.</title>
        <authorList>
            <person name="Rout M.P."/>
            <person name="Aitchison J.D."/>
            <person name="Suprapto A."/>
            <person name="Hjertaas K."/>
            <person name="Zhao Y."/>
            <person name="Chait B.T."/>
        </authorList>
    </citation>
    <scope>SUBCELLULAR LOCATION</scope>
</reference>
<reference key="8">
    <citation type="journal article" date="2001" name="Genome Biol.">
        <title>Importin-beta-like nuclear transport receptors.</title>
        <authorList>
            <person name="Stroem A.C."/>
            <person name="Weis K."/>
        </authorList>
    </citation>
    <scope>REVIEW</scope>
</reference>
<reference key="9">
    <citation type="journal article" date="2001" name="J. Cell Biol.">
        <title>Nuclear import of histone H2A and H2B is mediated by a network of karyopherins.</title>
        <authorList>
            <person name="Mosammaparast N."/>
            <person name="Jackson K.R."/>
            <person name="Guo Y."/>
            <person name="Brame C.J."/>
            <person name="Shabanowitz J."/>
            <person name="Hunt D.F."/>
            <person name="Pemberton L.F."/>
        </authorList>
    </citation>
    <scope>FUNCTION IN HISTONE H2A/H2B IMPORT</scope>
</reference>
<reference key="10">
    <citation type="journal article" date="2004" name="Mol. Genet. Genomics">
        <title>Nuclear import of yeast Gcn4p requires karyopherins Srp1p and Kap95p.</title>
        <authorList>
            <person name="Pries R."/>
            <person name="Boemeke K."/>
            <person name="Draht O."/>
            <person name="Kuenzler M."/>
            <person name="Braus G.H."/>
        </authorList>
    </citation>
    <scope>FUNCTION</scope>
    <source>
        <strain evidence="12">ATCC 200060 / W303</strain>
    </source>
</reference>
<reference key="11">
    <citation type="journal article" date="2003" name="Nature">
        <title>Global analysis of protein expression in yeast.</title>
        <authorList>
            <person name="Ghaemmaghami S."/>
            <person name="Huh W.-K."/>
            <person name="Bower K."/>
            <person name="Howson R.W."/>
            <person name="Belle A."/>
            <person name="Dephoure N."/>
            <person name="O'Shea E.K."/>
            <person name="Weissman J.S."/>
        </authorList>
    </citation>
    <scope>LEVEL OF PROTEIN EXPRESSION [LARGE SCALE ANALYSIS]</scope>
</reference>
<reference key="12">
    <citation type="journal article" date="2008" name="Mol. Cell. Proteomics">
        <title>A multidimensional chromatography technology for in-depth phosphoproteome analysis.</title>
        <authorList>
            <person name="Albuquerque C.P."/>
            <person name="Smolka M.B."/>
            <person name="Payne S.H."/>
            <person name="Bafna V."/>
            <person name="Eng J."/>
            <person name="Zhou H."/>
        </authorList>
    </citation>
    <scope>PHOSPHORYLATION [LARGE SCALE ANALYSIS] AT SER-836</scope>
    <scope>IDENTIFICATION BY MASS SPECTROMETRY [LARGE SCALE ANALYSIS]</scope>
</reference>
<reference key="13">
    <citation type="journal article" date="2012" name="Proc. Natl. Acad. Sci. U.S.A.">
        <title>N-terminal acetylome analyses and functional insights of the N-terminal acetyltransferase NatB.</title>
        <authorList>
            <person name="Van Damme P."/>
            <person name="Lasa M."/>
            <person name="Polevoda B."/>
            <person name="Gazquez C."/>
            <person name="Elosegui-Artola A."/>
            <person name="Kim D.S."/>
            <person name="De Juan-Pardo E."/>
            <person name="Demeyer K."/>
            <person name="Hole K."/>
            <person name="Larrea E."/>
            <person name="Timmerman E."/>
            <person name="Prieto J."/>
            <person name="Arnesen T."/>
            <person name="Sherman F."/>
            <person name="Gevaert K."/>
            <person name="Aldabe R."/>
        </authorList>
    </citation>
    <scope>ACETYLATION [LARGE SCALE ANALYSIS] AT SER-2</scope>
    <scope>CLEAVAGE OF INITIATOR METHIONINE [LARGE SCALE ANALYSIS]</scope>
    <scope>IDENTIFICATION BY MASS SPECTROMETRY [LARGE SCALE ANALYSIS]</scope>
</reference>
<reference key="14">
    <citation type="journal article" date="2005" name="J. Mol. Biol.">
        <title>Structural basis for the high-affinity binding of nucleoporin Nup1p to the Saccharomyces cerevisiae importin-beta homologue, Kap95p.</title>
        <authorList>
            <person name="Liu S.M."/>
            <person name="Stewart M."/>
        </authorList>
    </citation>
    <scope>X-RAY CRYSTALLOGRAPHY (1.99 ANGSTROMS) IN COMPLEX WITH NUP1</scope>
    <scope>REPEAT STRUCTURE</scope>
</reference>
<reference key="15">
    <citation type="journal article" date="2005" name="Nature">
        <title>Structural basis for nuclear import complex dissociation by RanGTP.</title>
        <authorList>
            <person name="Lee S.J."/>
            <person name="Matsuura Y."/>
            <person name="Liu S.M."/>
            <person name="Stewart M."/>
        </authorList>
    </citation>
    <scope>X-RAY CRYSTALLOGRAPHY (2.70 ANGSTROMS) IN COMPLEX WITH GSP1</scope>
    <scope>FUNCTION</scope>
</reference>
<reference key="16">
    <citation type="journal article" date="2008" name="J. Mol. Biol.">
        <title>Kap95p binding induces the switch loops of RanGDP to adopt the GTP-bound conformation: implications for nuclear import complex assembly dynamics.</title>
        <authorList>
            <person name="Forwood J.K."/>
            <person name="Lonhienne T.G."/>
            <person name="Marfori M."/>
            <person name="Robin G."/>
            <person name="Meng W."/>
            <person name="Guncar G."/>
            <person name="Liu S.M."/>
            <person name="Stewart M."/>
            <person name="Carroll B.J."/>
            <person name="Kobe B."/>
        </authorList>
    </citation>
    <scope>X-RAY CRYSTALLOGRAPHY (2.50 ANGSTROMS) IN COMPLEX WITH GSP1</scope>
</reference>
<reference key="17">
    <citation type="journal article" date="2010" name="Structure">
        <title>Quantitative structural analysis of importin-beta flexibility: paradigm for solenoid protein structures.</title>
        <authorList>
            <person name="Forwood J.K."/>
            <person name="Lange A."/>
            <person name="Zachariae U."/>
            <person name="Marfori M."/>
            <person name="Preast C."/>
            <person name="Grubmuller H."/>
            <person name="Stewart M."/>
            <person name="Corbett A.H."/>
            <person name="Kobe B."/>
        </authorList>
    </citation>
    <scope>X-RAY CRYSTALLOGRAPHY (2.40 ANGSTROMS)</scope>
</reference>
<dbReference type="EMBL" id="U19028">
    <property type="protein sequence ID" value="AAB67265.1"/>
    <property type="molecule type" value="Genomic_DNA"/>
</dbReference>
<dbReference type="EMBL" id="BK006945">
    <property type="protein sequence ID" value="DAA09652.1"/>
    <property type="molecule type" value="Genomic_DNA"/>
</dbReference>
<dbReference type="PIR" id="S51350">
    <property type="entry name" value="S51350"/>
</dbReference>
<dbReference type="RefSeq" id="NP_013451.1">
    <property type="nucleotide sequence ID" value="NM_001182236.1"/>
</dbReference>
<dbReference type="PDB" id="2BKU">
    <property type="method" value="X-ray"/>
    <property type="resolution" value="2.70 A"/>
    <property type="chains" value="B/D=1-861"/>
</dbReference>
<dbReference type="PDB" id="3EA5">
    <property type="method" value="X-ray"/>
    <property type="resolution" value="2.50 A"/>
    <property type="chains" value="B/D=1-861"/>
</dbReference>
<dbReference type="PDB" id="3ND2">
    <property type="method" value="X-ray"/>
    <property type="resolution" value="2.40 A"/>
    <property type="chains" value="A=1-861"/>
</dbReference>
<dbReference type="PDB" id="5OWU">
    <property type="method" value="X-ray"/>
    <property type="resolution" value="2.00 A"/>
    <property type="chains" value="A=1-861"/>
</dbReference>
<dbReference type="PDBsum" id="2BKU"/>
<dbReference type="PDBsum" id="3EA5"/>
<dbReference type="PDBsum" id="3ND2"/>
<dbReference type="PDBsum" id="5OWU"/>
<dbReference type="SMR" id="Q06142"/>
<dbReference type="BioGRID" id="31610">
    <property type="interactions" value="669"/>
</dbReference>
<dbReference type="ComplexPortal" id="CPX-1068">
    <property type="entry name" value="Importin complex, KAP60-KAP95"/>
</dbReference>
<dbReference type="DIP" id="DIP-2357N"/>
<dbReference type="FunCoup" id="Q06142">
    <property type="interactions" value="1764"/>
</dbReference>
<dbReference type="IntAct" id="Q06142">
    <property type="interactions" value="107"/>
</dbReference>
<dbReference type="MINT" id="Q06142"/>
<dbReference type="STRING" id="4932.YLR347C"/>
<dbReference type="GlyGen" id="Q06142">
    <property type="glycosylation" value="1 site"/>
</dbReference>
<dbReference type="iPTMnet" id="Q06142"/>
<dbReference type="PaxDb" id="4932-YLR347C"/>
<dbReference type="PeptideAtlas" id="Q06142"/>
<dbReference type="EnsemblFungi" id="YLR347C_mRNA">
    <property type="protein sequence ID" value="YLR347C"/>
    <property type="gene ID" value="YLR347C"/>
</dbReference>
<dbReference type="GeneID" id="851061"/>
<dbReference type="KEGG" id="sce:YLR347C"/>
<dbReference type="AGR" id="SGD:S000004339"/>
<dbReference type="SGD" id="S000004339">
    <property type="gene designation" value="KAP95"/>
</dbReference>
<dbReference type="VEuPathDB" id="FungiDB:YLR347C"/>
<dbReference type="eggNOG" id="KOG1241">
    <property type="taxonomic scope" value="Eukaryota"/>
</dbReference>
<dbReference type="GeneTree" id="ENSGT00550000074898"/>
<dbReference type="HOGENOM" id="CLU_008296_1_0_1"/>
<dbReference type="InParanoid" id="Q06142"/>
<dbReference type="OMA" id="QQYQERW"/>
<dbReference type="OrthoDB" id="10263328at2759"/>
<dbReference type="BioCyc" id="YEAST:G3O-32423-MONOMER"/>
<dbReference type="Reactome" id="R-SCE-2995383">
    <property type="pathway name" value="Initiation of Nuclear Envelope (NE) Reformation"/>
</dbReference>
<dbReference type="Reactome" id="R-SCE-6798695">
    <property type="pathway name" value="Neutrophil degranulation"/>
</dbReference>
<dbReference type="BioGRID-ORCS" id="851061">
    <property type="hits" value="7 hits in 10 CRISPR screens"/>
</dbReference>
<dbReference type="EvolutionaryTrace" id="Q06142"/>
<dbReference type="PRO" id="PR:Q06142"/>
<dbReference type="Proteomes" id="UP000002311">
    <property type="component" value="Chromosome XII"/>
</dbReference>
<dbReference type="RNAct" id="Q06142">
    <property type="molecule type" value="protein"/>
</dbReference>
<dbReference type="GO" id="GO:0005737">
    <property type="term" value="C:cytoplasm"/>
    <property type="evidence" value="ECO:0000314"/>
    <property type="project" value="SGD"/>
</dbReference>
<dbReference type="GO" id="GO:0005829">
    <property type="term" value="C:cytosol"/>
    <property type="evidence" value="ECO:0000314"/>
    <property type="project" value="ComplexPortal"/>
</dbReference>
<dbReference type="GO" id="GO:0042564">
    <property type="term" value="C:NLS-dependent protein nuclear import complex"/>
    <property type="evidence" value="ECO:0000314"/>
    <property type="project" value="SGD"/>
</dbReference>
<dbReference type="GO" id="GO:0005635">
    <property type="term" value="C:nuclear envelope"/>
    <property type="evidence" value="ECO:0000314"/>
    <property type="project" value="ComplexPortal"/>
</dbReference>
<dbReference type="GO" id="GO:0005643">
    <property type="term" value="C:nuclear pore"/>
    <property type="evidence" value="ECO:0007669"/>
    <property type="project" value="UniProtKB-SubCell"/>
</dbReference>
<dbReference type="GO" id="GO:0005634">
    <property type="term" value="C:nucleus"/>
    <property type="evidence" value="ECO:0000314"/>
    <property type="project" value="SGD"/>
</dbReference>
<dbReference type="GO" id="GO:0097718">
    <property type="term" value="F:disordered domain specific binding"/>
    <property type="evidence" value="ECO:0000353"/>
    <property type="project" value="CAFA"/>
</dbReference>
<dbReference type="GO" id="GO:0005085">
    <property type="term" value="F:guanyl-nucleotide exchange factor activity"/>
    <property type="evidence" value="ECO:0000314"/>
    <property type="project" value="SGD"/>
</dbReference>
<dbReference type="GO" id="GO:0061676">
    <property type="term" value="F:importin-alpha family protein binding"/>
    <property type="evidence" value="ECO:0000353"/>
    <property type="project" value="CAFA"/>
</dbReference>
<dbReference type="GO" id="GO:0061608">
    <property type="term" value="F:nuclear import signal receptor activity"/>
    <property type="evidence" value="ECO:0000314"/>
    <property type="project" value="SGD"/>
</dbReference>
<dbReference type="GO" id="GO:0008139">
    <property type="term" value="F:nuclear localization sequence binding"/>
    <property type="evidence" value="ECO:0000318"/>
    <property type="project" value="GO_Central"/>
</dbReference>
<dbReference type="GO" id="GO:0044877">
    <property type="term" value="F:protein-containing complex binding"/>
    <property type="evidence" value="ECO:0000314"/>
    <property type="project" value="SGD"/>
</dbReference>
<dbReference type="GO" id="GO:0031267">
    <property type="term" value="F:small GTPase binding"/>
    <property type="evidence" value="ECO:0007669"/>
    <property type="project" value="InterPro"/>
</dbReference>
<dbReference type="GO" id="GO:0051170">
    <property type="term" value="P:import into nucleus"/>
    <property type="evidence" value="ECO:0000303"/>
    <property type="project" value="ComplexPortal"/>
</dbReference>
<dbReference type="GO" id="GO:0051028">
    <property type="term" value="P:mRNA transport"/>
    <property type="evidence" value="ECO:0007669"/>
    <property type="project" value="UniProtKB-KW"/>
</dbReference>
<dbReference type="GO" id="GO:0006607">
    <property type="term" value="P:NLS-bearing protein import into nucleus"/>
    <property type="evidence" value="ECO:0000315"/>
    <property type="project" value="SGD"/>
</dbReference>
<dbReference type="GO" id="GO:0051292">
    <property type="term" value="P:nuclear pore complex assembly"/>
    <property type="evidence" value="ECO:0000315"/>
    <property type="project" value="SGD"/>
</dbReference>
<dbReference type="GO" id="GO:0006656">
    <property type="term" value="P:phosphatidylcholine biosynthetic process"/>
    <property type="evidence" value="ECO:0000315"/>
    <property type="project" value="SGD"/>
</dbReference>
<dbReference type="GO" id="GO:0006606">
    <property type="term" value="P:protein import into nucleus"/>
    <property type="evidence" value="ECO:0000315"/>
    <property type="project" value="UniProtKB"/>
</dbReference>
<dbReference type="GO" id="GO:0006612">
    <property type="term" value="P:protein targeting to membrane"/>
    <property type="evidence" value="ECO:0000315"/>
    <property type="project" value="SGD"/>
</dbReference>
<dbReference type="GO" id="GO:0046822">
    <property type="term" value="P:regulation of nucleocytoplasmic transport"/>
    <property type="evidence" value="ECO:0000314"/>
    <property type="project" value="SGD"/>
</dbReference>
<dbReference type="GO" id="GO:0060188">
    <property type="term" value="P:regulation of protein desumoylation"/>
    <property type="evidence" value="ECO:0000315"/>
    <property type="project" value="SGD"/>
</dbReference>
<dbReference type="FunFam" id="1.25.10.10:FF:000027">
    <property type="entry name" value="Importin subunit beta-1"/>
    <property type="match status" value="1"/>
</dbReference>
<dbReference type="Gene3D" id="1.25.10.10">
    <property type="entry name" value="Leucine-rich Repeat Variant"/>
    <property type="match status" value="1"/>
</dbReference>
<dbReference type="IDEAL" id="IID50327"/>
<dbReference type="InterPro" id="IPR011989">
    <property type="entry name" value="ARM-like"/>
</dbReference>
<dbReference type="InterPro" id="IPR016024">
    <property type="entry name" value="ARM-type_fold"/>
</dbReference>
<dbReference type="InterPro" id="IPR000225">
    <property type="entry name" value="Armadillo"/>
</dbReference>
<dbReference type="InterPro" id="IPR021133">
    <property type="entry name" value="HEAT_type_2"/>
</dbReference>
<dbReference type="InterPro" id="IPR001494">
    <property type="entry name" value="Importin-beta_N"/>
</dbReference>
<dbReference type="InterPro" id="IPR040122">
    <property type="entry name" value="Importin_beta"/>
</dbReference>
<dbReference type="PANTHER" id="PTHR10527">
    <property type="entry name" value="IMPORTIN BETA"/>
    <property type="match status" value="1"/>
</dbReference>
<dbReference type="Pfam" id="PF13513">
    <property type="entry name" value="HEAT_EZ"/>
    <property type="match status" value="1"/>
</dbReference>
<dbReference type="Pfam" id="PF03810">
    <property type="entry name" value="IBN_N"/>
    <property type="match status" value="1"/>
</dbReference>
<dbReference type="SMART" id="SM00185">
    <property type="entry name" value="ARM"/>
    <property type="match status" value="2"/>
</dbReference>
<dbReference type="SMART" id="SM00913">
    <property type="entry name" value="IBN_N"/>
    <property type="match status" value="1"/>
</dbReference>
<dbReference type="SUPFAM" id="SSF48371">
    <property type="entry name" value="ARM repeat"/>
    <property type="match status" value="1"/>
</dbReference>
<dbReference type="PROSITE" id="PS50077">
    <property type="entry name" value="HEAT_REPEAT"/>
    <property type="match status" value="1"/>
</dbReference>
<dbReference type="PROSITE" id="PS50166">
    <property type="entry name" value="IMPORTIN_B_NT"/>
    <property type="match status" value="1"/>
</dbReference>